<gene>
    <name evidence="1" type="primary">ubiB</name>
    <name type="ordered locus">NMB0559</name>
</gene>
<protein>
    <recommendedName>
        <fullName evidence="1">Probable protein kinase UbiB</fullName>
        <ecNumber evidence="1">2.7.-.-</ecNumber>
    </recommendedName>
    <alternativeName>
        <fullName evidence="1">Ubiquinone biosynthesis protein UbiB</fullName>
    </alternativeName>
</protein>
<sequence>MKWLKRLTVIVGTFYRYRLAGLCASLMGSGWICALLKMMPQSSKLKNEPPAVRLRLALESLGPIFIKFGQVLSTRPDLIPHDYAVELAKLQDKVPPFDARLSREQIEKSLGQSIEKLYAEFETEPIASASIAQVHKARLHSGEQVAVKVLRPNLLPVIEQDLSLMRFGAGWVERLFADGKRLKPREVVAEFDKYLHDELDLMREAANASQLGRNFQNSDMLIVPKVFYDYCTSDVLTIEWMDGTPVSDIAKLKADGIDLHKLADYGVEIFFTQVFRDGFFHADMHPGNILVAADNRYIALDFGIVGTLTDYDKRYLAINFLAFFNRDYRRVATAHIESGWVPADTRAEELEAAVRAVCEPVFNKPISQISFGLVLMRLFEVSRRFNVEIQPQLVLLQKTLLNIEGLGRQLDPDLDLWKTAKPFLVKWMNGQVGPKALWRNLKNEAPDWAQIIPSLPRKISALIDENRQQEMRDAYIHLVKVQQRQSLWLAVIAVVLLLILLLK</sequence>
<evidence type="ECO:0000255" key="1">
    <source>
        <dbReference type="HAMAP-Rule" id="MF_00414"/>
    </source>
</evidence>
<accession>Q9K0N0</accession>
<keyword id="KW-0067">ATP-binding</keyword>
<keyword id="KW-0997">Cell inner membrane</keyword>
<keyword id="KW-1003">Cell membrane</keyword>
<keyword id="KW-0418">Kinase</keyword>
<keyword id="KW-0472">Membrane</keyword>
<keyword id="KW-0547">Nucleotide-binding</keyword>
<keyword id="KW-1185">Reference proteome</keyword>
<keyword id="KW-0808">Transferase</keyword>
<keyword id="KW-0812">Transmembrane</keyword>
<keyword id="KW-1133">Transmembrane helix</keyword>
<keyword id="KW-0831">Ubiquinone biosynthesis</keyword>
<name>UBIB_NEIMB</name>
<reference key="1">
    <citation type="journal article" date="2000" name="Science">
        <title>Complete genome sequence of Neisseria meningitidis serogroup B strain MC58.</title>
        <authorList>
            <person name="Tettelin H."/>
            <person name="Saunders N.J."/>
            <person name="Heidelberg J.F."/>
            <person name="Jeffries A.C."/>
            <person name="Nelson K.E."/>
            <person name="Eisen J.A."/>
            <person name="Ketchum K.A."/>
            <person name="Hood D.W."/>
            <person name="Peden J.F."/>
            <person name="Dodson R.J."/>
            <person name="Nelson W.C."/>
            <person name="Gwinn M.L."/>
            <person name="DeBoy R.T."/>
            <person name="Peterson J.D."/>
            <person name="Hickey E.K."/>
            <person name="Haft D.H."/>
            <person name="Salzberg S.L."/>
            <person name="White O."/>
            <person name="Fleischmann R.D."/>
            <person name="Dougherty B.A."/>
            <person name="Mason T.M."/>
            <person name="Ciecko A."/>
            <person name="Parksey D.S."/>
            <person name="Blair E."/>
            <person name="Cittone H."/>
            <person name="Clark E.B."/>
            <person name="Cotton M.D."/>
            <person name="Utterback T.R."/>
            <person name="Khouri H.M."/>
            <person name="Qin H."/>
            <person name="Vamathevan J.J."/>
            <person name="Gill J."/>
            <person name="Scarlato V."/>
            <person name="Masignani V."/>
            <person name="Pizza M."/>
            <person name="Grandi G."/>
            <person name="Sun L."/>
            <person name="Smith H.O."/>
            <person name="Fraser C.M."/>
            <person name="Moxon E.R."/>
            <person name="Rappuoli R."/>
            <person name="Venter J.C."/>
        </authorList>
    </citation>
    <scope>NUCLEOTIDE SEQUENCE [LARGE SCALE GENOMIC DNA]</scope>
    <source>
        <strain>ATCC BAA-335 / MC58</strain>
    </source>
</reference>
<comment type="function">
    <text evidence="1">Is probably a protein kinase regulator of UbiI activity which is involved in aerobic coenzyme Q (ubiquinone) biosynthesis.</text>
</comment>
<comment type="pathway">
    <text>Cofactor biosynthesis; ubiquinone biosynthesis [regulation].</text>
</comment>
<comment type="subcellular location">
    <subcellularLocation>
        <location evidence="1">Cell inner membrane</location>
        <topology evidence="1">Multi-pass membrane protein</topology>
    </subcellularLocation>
</comment>
<comment type="similarity">
    <text evidence="1">Belongs to the ABC1 family. UbiB subfamily.</text>
</comment>
<dbReference type="EC" id="2.7.-.-" evidence="1"/>
<dbReference type="EMBL" id="AE002098">
    <property type="protein sequence ID" value="AAF40987.1"/>
    <property type="molecule type" value="Genomic_DNA"/>
</dbReference>
<dbReference type="PIR" id="B81184">
    <property type="entry name" value="B81184"/>
</dbReference>
<dbReference type="RefSeq" id="NP_273603.1">
    <property type="nucleotide sequence ID" value="NC_003112.2"/>
</dbReference>
<dbReference type="RefSeq" id="WP_002225567.1">
    <property type="nucleotide sequence ID" value="NC_003112.2"/>
</dbReference>
<dbReference type="SMR" id="Q9K0N0"/>
<dbReference type="FunCoup" id="Q9K0N0">
    <property type="interactions" value="316"/>
</dbReference>
<dbReference type="STRING" id="122586.NMB0559"/>
<dbReference type="PaxDb" id="122586-NMB0559"/>
<dbReference type="KEGG" id="nme:NMB0559"/>
<dbReference type="PATRIC" id="fig|122586.8.peg.715"/>
<dbReference type="HOGENOM" id="CLU_006533_0_0_4"/>
<dbReference type="InParanoid" id="Q9K0N0"/>
<dbReference type="OrthoDB" id="9795390at2"/>
<dbReference type="UniPathway" id="UPA00232"/>
<dbReference type="Proteomes" id="UP000000425">
    <property type="component" value="Chromosome"/>
</dbReference>
<dbReference type="GO" id="GO:0005886">
    <property type="term" value="C:plasma membrane"/>
    <property type="evidence" value="ECO:0007669"/>
    <property type="project" value="UniProtKB-SubCell"/>
</dbReference>
<dbReference type="GO" id="GO:0005524">
    <property type="term" value="F:ATP binding"/>
    <property type="evidence" value="ECO:0007669"/>
    <property type="project" value="UniProtKB-KW"/>
</dbReference>
<dbReference type="GO" id="GO:0004672">
    <property type="term" value="F:protein kinase activity"/>
    <property type="evidence" value="ECO:0007669"/>
    <property type="project" value="UniProtKB-UniRule"/>
</dbReference>
<dbReference type="GO" id="GO:0010795">
    <property type="term" value="P:regulation of ubiquinone biosynthetic process"/>
    <property type="evidence" value="ECO:0007669"/>
    <property type="project" value="UniProtKB-UniRule"/>
</dbReference>
<dbReference type="GO" id="GO:0006744">
    <property type="term" value="P:ubiquinone biosynthetic process"/>
    <property type="evidence" value="ECO:0007669"/>
    <property type="project" value="UniProtKB-UniPathway"/>
</dbReference>
<dbReference type="CDD" id="cd13972">
    <property type="entry name" value="UbiB"/>
    <property type="match status" value="1"/>
</dbReference>
<dbReference type="Gene3D" id="1.10.510.10">
    <property type="entry name" value="Transferase(Phosphotransferase) domain 1"/>
    <property type="match status" value="1"/>
</dbReference>
<dbReference type="HAMAP" id="MF_00414">
    <property type="entry name" value="UbiB"/>
    <property type="match status" value="1"/>
</dbReference>
<dbReference type="InterPro" id="IPR004147">
    <property type="entry name" value="ABC1_dom"/>
</dbReference>
<dbReference type="InterPro" id="IPR011009">
    <property type="entry name" value="Kinase-like_dom_sf"/>
</dbReference>
<dbReference type="InterPro" id="IPR010232">
    <property type="entry name" value="UbiB"/>
</dbReference>
<dbReference type="InterPro" id="IPR045308">
    <property type="entry name" value="UbiB_bact"/>
</dbReference>
<dbReference type="InterPro" id="IPR050154">
    <property type="entry name" value="UbiB_kinase"/>
</dbReference>
<dbReference type="NCBIfam" id="NF003404">
    <property type="entry name" value="PRK04750.1"/>
    <property type="match status" value="1"/>
</dbReference>
<dbReference type="NCBIfam" id="TIGR01982">
    <property type="entry name" value="UbiB"/>
    <property type="match status" value="1"/>
</dbReference>
<dbReference type="PANTHER" id="PTHR10566">
    <property type="entry name" value="CHAPERONE-ACTIVITY OF BC1 COMPLEX CABC1 -RELATED"/>
    <property type="match status" value="1"/>
</dbReference>
<dbReference type="PANTHER" id="PTHR10566:SF113">
    <property type="entry name" value="PROTEIN ACTIVITY OF BC1 COMPLEX KINASE 7, CHLOROPLASTIC"/>
    <property type="match status" value="1"/>
</dbReference>
<dbReference type="Pfam" id="PF03109">
    <property type="entry name" value="ABC1"/>
    <property type="match status" value="1"/>
</dbReference>
<dbReference type="SUPFAM" id="SSF56112">
    <property type="entry name" value="Protein kinase-like (PK-like)"/>
    <property type="match status" value="1"/>
</dbReference>
<organism>
    <name type="scientific">Neisseria meningitidis serogroup B (strain ATCC BAA-335 / MC58)</name>
    <dbReference type="NCBI Taxonomy" id="122586"/>
    <lineage>
        <taxon>Bacteria</taxon>
        <taxon>Pseudomonadati</taxon>
        <taxon>Pseudomonadota</taxon>
        <taxon>Betaproteobacteria</taxon>
        <taxon>Neisseriales</taxon>
        <taxon>Neisseriaceae</taxon>
        <taxon>Neisseria</taxon>
    </lineage>
</organism>
<feature type="chain" id="PRO_0000200709" description="Probable protein kinase UbiB">
    <location>
        <begin position="1"/>
        <end position="503"/>
    </location>
</feature>
<feature type="transmembrane region" description="Helical" evidence="1">
    <location>
        <begin position="13"/>
        <end position="35"/>
    </location>
</feature>
<feature type="transmembrane region" description="Helical" evidence="1">
    <location>
        <begin position="485"/>
        <end position="502"/>
    </location>
</feature>
<feature type="domain" description="Protein kinase" evidence="1">
    <location>
        <begin position="120"/>
        <end position="491"/>
    </location>
</feature>
<feature type="active site" description="Proton acceptor" evidence="1">
    <location>
        <position position="283"/>
    </location>
</feature>
<feature type="binding site" evidence="1">
    <location>
        <begin position="126"/>
        <end position="134"/>
    </location>
    <ligand>
        <name>ATP</name>
        <dbReference type="ChEBI" id="CHEBI:30616"/>
    </ligand>
</feature>
<feature type="binding site" evidence="1">
    <location>
        <position position="148"/>
    </location>
    <ligand>
        <name>ATP</name>
        <dbReference type="ChEBI" id="CHEBI:30616"/>
    </ligand>
</feature>
<proteinExistence type="inferred from homology"/>